<organism>
    <name type="scientific">Bacillus thuringiensis subsp. konkukian (strain 97-27)</name>
    <dbReference type="NCBI Taxonomy" id="281309"/>
    <lineage>
        <taxon>Bacteria</taxon>
        <taxon>Bacillati</taxon>
        <taxon>Bacillota</taxon>
        <taxon>Bacilli</taxon>
        <taxon>Bacillales</taxon>
        <taxon>Bacillaceae</taxon>
        <taxon>Bacillus</taxon>
        <taxon>Bacillus cereus group</taxon>
    </lineage>
</organism>
<sequence length="324" mass="36470">MAELEFEKPVVELRNKIRELKDYTKNSQMDFSEEIRILEDKLENLEEDIYGNMKVWDRVQIARHAERPTTLDYIEHLFTDFFECHGDRLFGDDAAIVGGIAKYKGMPVTVIGHQRGKDTKENIRRNFGMPHPEGYRKALRLMKQAEKFNRPIICFIDTKGAYPGKAAEERGQSEAIARNLFEMAGLTVPVICIVIGEGGSGGALGLGVGDYIHMLENSTYSVITPEGAAAILWKDAGKAKEAAEAMRITAADLKELGVIDEIIPEAKGGAHRNVLKQSENIDLMLRKTFEQLNGISKDELIEKRYEKYMKIGQVSFSNASIWIK</sequence>
<proteinExistence type="inferred from homology"/>
<keyword id="KW-0067">ATP-binding</keyword>
<keyword id="KW-0963">Cytoplasm</keyword>
<keyword id="KW-0275">Fatty acid biosynthesis</keyword>
<keyword id="KW-0276">Fatty acid metabolism</keyword>
<keyword id="KW-0444">Lipid biosynthesis</keyword>
<keyword id="KW-0443">Lipid metabolism</keyword>
<keyword id="KW-0547">Nucleotide-binding</keyword>
<keyword id="KW-0808">Transferase</keyword>
<reference key="1">
    <citation type="journal article" date="2006" name="J. Bacteriol.">
        <title>Pathogenomic sequence analysis of Bacillus cereus and Bacillus thuringiensis isolates closely related to Bacillus anthracis.</title>
        <authorList>
            <person name="Han C.S."/>
            <person name="Xie G."/>
            <person name="Challacombe J.F."/>
            <person name="Altherr M.R."/>
            <person name="Bhotika S.S."/>
            <person name="Bruce D."/>
            <person name="Campbell C.S."/>
            <person name="Campbell M.L."/>
            <person name="Chen J."/>
            <person name="Chertkov O."/>
            <person name="Cleland C."/>
            <person name="Dimitrijevic M."/>
            <person name="Doggett N.A."/>
            <person name="Fawcett J.J."/>
            <person name="Glavina T."/>
            <person name="Goodwin L.A."/>
            <person name="Hill K.K."/>
            <person name="Hitchcock P."/>
            <person name="Jackson P.J."/>
            <person name="Keim P."/>
            <person name="Kewalramani A.R."/>
            <person name="Longmire J."/>
            <person name="Lucas S."/>
            <person name="Malfatti S."/>
            <person name="McMurry K."/>
            <person name="Meincke L.J."/>
            <person name="Misra M."/>
            <person name="Moseman B.L."/>
            <person name="Mundt M."/>
            <person name="Munk A.C."/>
            <person name="Okinaka R.T."/>
            <person name="Parson-Quintana B."/>
            <person name="Reilly L.P."/>
            <person name="Richardson P."/>
            <person name="Robinson D.L."/>
            <person name="Rubin E."/>
            <person name="Saunders E."/>
            <person name="Tapia R."/>
            <person name="Tesmer J.G."/>
            <person name="Thayer N."/>
            <person name="Thompson L.S."/>
            <person name="Tice H."/>
            <person name="Ticknor L.O."/>
            <person name="Wills P.L."/>
            <person name="Brettin T.S."/>
            <person name="Gilna P."/>
        </authorList>
    </citation>
    <scope>NUCLEOTIDE SEQUENCE [LARGE SCALE GENOMIC DNA]</scope>
    <source>
        <strain>97-27</strain>
    </source>
</reference>
<evidence type="ECO:0000255" key="1">
    <source>
        <dbReference type="HAMAP-Rule" id="MF_00823"/>
    </source>
</evidence>
<evidence type="ECO:0000255" key="2">
    <source>
        <dbReference type="PROSITE-ProRule" id="PRU01137"/>
    </source>
</evidence>
<dbReference type="EC" id="2.1.3.15" evidence="1"/>
<dbReference type="EMBL" id="AE017355">
    <property type="protein sequence ID" value="AAT60899.1"/>
    <property type="molecule type" value="Genomic_DNA"/>
</dbReference>
<dbReference type="RefSeq" id="WP_000818794.1">
    <property type="nucleotide sequence ID" value="NC_005957.1"/>
</dbReference>
<dbReference type="RefSeq" id="YP_038644.1">
    <property type="nucleotide sequence ID" value="NC_005957.1"/>
</dbReference>
<dbReference type="SMR" id="Q6HCT2"/>
<dbReference type="GeneID" id="75087757"/>
<dbReference type="KEGG" id="btk:BT9727_4329"/>
<dbReference type="PATRIC" id="fig|281309.8.peg.4615"/>
<dbReference type="HOGENOM" id="CLU_015486_0_2_9"/>
<dbReference type="UniPathway" id="UPA00655">
    <property type="reaction ID" value="UER00711"/>
</dbReference>
<dbReference type="Proteomes" id="UP000001301">
    <property type="component" value="Chromosome"/>
</dbReference>
<dbReference type="GO" id="GO:0009317">
    <property type="term" value="C:acetyl-CoA carboxylase complex"/>
    <property type="evidence" value="ECO:0007669"/>
    <property type="project" value="InterPro"/>
</dbReference>
<dbReference type="GO" id="GO:0003989">
    <property type="term" value="F:acetyl-CoA carboxylase activity"/>
    <property type="evidence" value="ECO:0007669"/>
    <property type="project" value="InterPro"/>
</dbReference>
<dbReference type="GO" id="GO:0005524">
    <property type="term" value="F:ATP binding"/>
    <property type="evidence" value="ECO:0007669"/>
    <property type="project" value="UniProtKB-KW"/>
</dbReference>
<dbReference type="GO" id="GO:0016743">
    <property type="term" value="F:carboxyl- or carbamoyltransferase activity"/>
    <property type="evidence" value="ECO:0007669"/>
    <property type="project" value="UniProtKB-UniRule"/>
</dbReference>
<dbReference type="GO" id="GO:0006633">
    <property type="term" value="P:fatty acid biosynthetic process"/>
    <property type="evidence" value="ECO:0007669"/>
    <property type="project" value="UniProtKB-KW"/>
</dbReference>
<dbReference type="GO" id="GO:2001295">
    <property type="term" value="P:malonyl-CoA biosynthetic process"/>
    <property type="evidence" value="ECO:0007669"/>
    <property type="project" value="UniProtKB-UniRule"/>
</dbReference>
<dbReference type="Gene3D" id="3.90.226.10">
    <property type="entry name" value="2-enoyl-CoA Hydratase, Chain A, domain 1"/>
    <property type="match status" value="1"/>
</dbReference>
<dbReference type="HAMAP" id="MF_00823">
    <property type="entry name" value="AcetylCoA_CT_alpha"/>
    <property type="match status" value="1"/>
</dbReference>
<dbReference type="InterPro" id="IPR001095">
    <property type="entry name" value="Acetyl_CoA_COase_a_su"/>
</dbReference>
<dbReference type="InterPro" id="IPR029045">
    <property type="entry name" value="ClpP/crotonase-like_dom_sf"/>
</dbReference>
<dbReference type="InterPro" id="IPR011763">
    <property type="entry name" value="COA_CT_C"/>
</dbReference>
<dbReference type="NCBIfam" id="TIGR00513">
    <property type="entry name" value="accA"/>
    <property type="match status" value="1"/>
</dbReference>
<dbReference type="NCBIfam" id="NF041504">
    <property type="entry name" value="AccA_sub"/>
    <property type="match status" value="1"/>
</dbReference>
<dbReference type="NCBIfam" id="NF004344">
    <property type="entry name" value="PRK05724.1"/>
    <property type="match status" value="1"/>
</dbReference>
<dbReference type="PANTHER" id="PTHR42853">
    <property type="entry name" value="ACETYL-COENZYME A CARBOXYLASE CARBOXYL TRANSFERASE SUBUNIT ALPHA"/>
    <property type="match status" value="1"/>
</dbReference>
<dbReference type="PANTHER" id="PTHR42853:SF3">
    <property type="entry name" value="ACETYL-COENZYME A CARBOXYLASE CARBOXYL TRANSFERASE SUBUNIT ALPHA, CHLOROPLASTIC"/>
    <property type="match status" value="1"/>
</dbReference>
<dbReference type="Pfam" id="PF03255">
    <property type="entry name" value="ACCA"/>
    <property type="match status" value="1"/>
</dbReference>
<dbReference type="PRINTS" id="PR01069">
    <property type="entry name" value="ACCCTRFRASEA"/>
</dbReference>
<dbReference type="SUPFAM" id="SSF52096">
    <property type="entry name" value="ClpP/crotonase"/>
    <property type="match status" value="1"/>
</dbReference>
<dbReference type="PROSITE" id="PS50989">
    <property type="entry name" value="COA_CT_CTER"/>
    <property type="match status" value="1"/>
</dbReference>
<comment type="function">
    <text evidence="1">Component of the acetyl coenzyme A carboxylase (ACC) complex. First, biotin carboxylase catalyzes the carboxylation of biotin on its carrier protein (BCCP) and then the CO(2) group is transferred by the carboxyltransferase to acetyl-CoA to form malonyl-CoA.</text>
</comment>
<comment type="catalytic activity">
    <reaction evidence="1">
        <text>N(6)-carboxybiotinyl-L-lysyl-[protein] + acetyl-CoA = N(6)-biotinyl-L-lysyl-[protein] + malonyl-CoA</text>
        <dbReference type="Rhea" id="RHEA:54728"/>
        <dbReference type="Rhea" id="RHEA-COMP:10505"/>
        <dbReference type="Rhea" id="RHEA-COMP:10506"/>
        <dbReference type="ChEBI" id="CHEBI:57288"/>
        <dbReference type="ChEBI" id="CHEBI:57384"/>
        <dbReference type="ChEBI" id="CHEBI:83144"/>
        <dbReference type="ChEBI" id="CHEBI:83145"/>
        <dbReference type="EC" id="2.1.3.15"/>
    </reaction>
</comment>
<comment type="pathway">
    <text evidence="1">Lipid metabolism; malonyl-CoA biosynthesis; malonyl-CoA from acetyl-CoA: step 1/1.</text>
</comment>
<comment type="subunit">
    <text evidence="1">Acetyl-CoA carboxylase is a heterohexamer composed of biotin carboxyl carrier protein (AccB), biotin carboxylase (AccC) and two subunits each of ACCase subunit alpha (AccA) and ACCase subunit beta (AccD).</text>
</comment>
<comment type="subcellular location">
    <subcellularLocation>
        <location evidence="1">Cytoplasm</location>
    </subcellularLocation>
</comment>
<comment type="similarity">
    <text evidence="1">Belongs to the AccA family.</text>
</comment>
<accession>Q6HCT2</accession>
<name>ACCA_BACHK</name>
<protein>
    <recommendedName>
        <fullName evidence="1">Acetyl-coenzyme A carboxylase carboxyl transferase subunit alpha</fullName>
        <shortName evidence="1">ACCase subunit alpha</shortName>
        <shortName evidence="1">Acetyl-CoA carboxylase carboxyltransferase subunit alpha</shortName>
        <ecNumber evidence="1">2.1.3.15</ecNumber>
    </recommendedName>
</protein>
<gene>
    <name evidence="1" type="primary">accA</name>
    <name type="ordered locus">BT9727_4329</name>
</gene>
<feature type="chain" id="PRO_0000223736" description="Acetyl-coenzyme A carboxylase carboxyl transferase subunit alpha">
    <location>
        <begin position="1"/>
        <end position="324"/>
    </location>
</feature>
<feature type="domain" description="CoA carboxyltransferase C-terminal" evidence="2">
    <location>
        <begin position="37"/>
        <end position="291"/>
    </location>
</feature>